<keyword id="KW-0030">Aminoacyl-tRNA synthetase</keyword>
<keyword id="KW-0067">ATP-binding</keyword>
<keyword id="KW-0963">Cytoplasm</keyword>
<keyword id="KW-0436">Ligase</keyword>
<keyword id="KW-0460">Magnesium</keyword>
<keyword id="KW-0479">Metal-binding</keyword>
<keyword id="KW-0547">Nucleotide-binding</keyword>
<keyword id="KW-0648">Protein biosynthesis</keyword>
<keyword id="KW-1185">Reference proteome</keyword>
<gene>
    <name type="primary">pheS</name>
    <name type="ordered locus">BH3111</name>
</gene>
<evidence type="ECO:0000250" key="1"/>
<evidence type="ECO:0000305" key="2"/>
<dbReference type="EC" id="6.1.1.20"/>
<dbReference type="EMBL" id="BA000004">
    <property type="protein sequence ID" value="BAB06830.1"/>
    <property type="molecule type" value="Genomic_DNA"/>
</dbReference>
<dbReference type="PIR" id="G84038">
    <property type="entry name" value="G84038"/>
</dbReference>
<dbReference type="RefSeq" id="WP_010899255.1">
    <property type="nucleotide sequence ID" value="NC_002570.2"/>
</dbReference>
<dbReference type="SMR" id="Q9K895"/>
<dbReference type="STRING" id="272558.gene:10729023"/>
<dbReference type="KEGG" id="bha:BH3111"/>
<dbReference type="eggNOG" id="COG0016">
    <property type="taxonomic scope" value="Bacteria"/>
</dbReference>
<dbReference type="HOGENOM" id="CLU_025086_0_1_9"/>
<dbReference type="OrthoDB" id="9800719at2"/>
<dbReference type="Proteomes" id="UP000001258">
    <property type="component" value="Chromosome"/>
</dbReference>
<dbReference type="GO" id="GO:0005737">
    <property type="term" value="C:cytoplasm"/>
    <property type="evidence" value="ECO:0007669"/>
    <property type="project" value="UniProtKB-SubCell"/>
</dbReference>
<dbReference type="GO" id="GO:0005524">
    <property type="term" value="F:ATP binding"/>
    <property type="evidence" value="ECO:0007669"/>
    <property type="project" value="UniProtKB-UniRule"/>
</dbReference>
<dbReference type="GO" id="GO:0140096">
    <property type="term" value="F:catalytic activity, acting on a protein"/>
    <property type="evidence" value="ECO:0007669"/>
    <property type="project" value="UniProtKB-ARBA"/>
</dbReference>
<dbReference type="GO" id="GO:0000287">
    <property type="term" value="F:magnesium ion binding"/>
    <property type="evidence" value="ECO:0007669"/>
    <property type="project" value="UniProtKB-UniRule"/>
</dbReference>
<dbReference type="GO" id="GO:0004826">
    <property type="term" value="F:phenylalanine-tRNA ligase activity"/>
    <property type="evidence" value="ECO:0007669"/>
    <property type="project" value="UniProtKB-UniRule"/>
</dbReference>
<dbReference type="GO" id="GO:0016740">
    <property type="term" value="F:transferase activity"/>
    <property type="evidence" value="ECO:0007669"/>
    <property type="project" value="UniProtKB-ARBA"/>
</dbReference>
<dbReference type="GO" id="GO:0000049">
    <property type="term" value="F:tRNA binding"/>
    <property type="evidence" value="ECO:0007669"/>
    <property type="project" value="InterPro"/>
</dbReference>
<dbReference type="GO" id="GO:0006432">
    <property type="term" value="P:phenylalanyl-tRNA aminoacylation"/>
    <property type="evidence" value="ECO:0007669"/>
    <property type="project" value="UniProtKB-UniRule"/>
</dbReference>
<dbReference type="CDD" id="cd00496">
    <property type="entry name" value="PheRS_alpha_core"/>
    <property type="match status" value="1"/>
</dbReference>
<dbReference type="FunFam" id="3.30.930.10:FF:000003">
    <property type="entry name" value="Phenylalanine--tRNA ligase alpha subunit"/>
    <property type="match status" value="1"/>
</dbReference>
<dbReference type="Gene3D" id="3.30.930.10">
    <property type="entry name" value="Bira Bifunctional Protein, Domain 2"/>
    <property type="match status" value="1"/>
</dbReference>
<dbReference type="HAMAP" id="MF_00281">
    <property type="entry name" value="Phe_tRNA_synth_alpha1"/>
    <property type="match status" value="1"/>
</dbReference>
<dbReference type="InterPro" id="IPR006195">
    <property type="entry name" value="aa-tRNA-synth_II"/>
</dbReference>
<dbReference type="InterPro" id="IPR045864">
    <property type="entry name" value="aa-tRNA-synth_II/BPL/LPL"/>
</dbReference>
<dbReference type="InterPro" id="IPR004529">
    <property type="entry name" value="Phe-tRNA-synth_IIc_asu"/>
</dbReference>
<dbReference type="InterPro" id="IPR004188">
    <property type="entry name" value="Phe-tRNA_ligase_II_N"/>
</dbReference>
<dbReference type="InterPro" id="IPR022911">
    <property type="entry name" value="Phe_tRNA_ligase_alpha1_bac"/>
</dbReference>
<dbReference type="InterPro" id="IPR002319">
    <property type="entry name" value="Phenylalanyl-tRNA_Synthase"/>
</dbReference>
<dbReference type="InterPro" id="IPR010978">
    <property type="entry name" value="tRNA-bd_arm"/>
</dbReference>
<dbReference type="NCBIfam" id="TIGR00468">
    <property type="entry name" value="pheS"/>
    <property type="match status" value="1"/>
</dbReference>
<dbReference type="PANTHER" id="PTHR11538:SF41">
    <property type="entry name" value="PHENYLALANINE--TRNA LIGASE, MITOCHONDRIAL"/>
    <property type="match status" value="1"/>
</dbReference>
<dbReference type="PANTHER" id="PTHR11538">
    <property type="entry name" value="PHENYLALANYL-TRNA SYNTHETASE"/>
    <property type="match status" value="1"/>
</dbReference>
<dbReference type="Pfam" id="PF02912">
    <property type="entry name" value="Phe_tRNA-synt_N"/>
    <property type="match status" value="1"/>
</dbReference>
<dbReference type="Pfam" id="PF01409">
    <property type="entry name" value="tRNA-synt_2d"/>
    <property type="match status" value="1"/>
</dbReference>
<dbReference type="SUPFAM" id="SSF55681">
    <property type="entry name" value="Class II aaRS and biotin synthetases"/>
    <property type="match status" value="1"/>
</dbReference>
<dbReference type="SUPFAM" id="SSF46589">
    <property type="entry name" value="tRNA-binding arm"/>
    <property type="match status" value="1"/>
</dbReference>
<dbReference type="PROSITE" id="PS50862">
    <property type="entry name" value="AA_TRNA_LIGASE_II"/>
    <property type="match status" value="1"/>
</dbReference>
<reference key="1">
    <citation type="journal article" date="2000" name="Nucleic Acids Res.">
        <title>Complete genome sequence of the alkaliphilic bacterium Bacillus halodurans and genomic sequence comparison with Bacillus subtilis.</title>
        <authorList>
            <person name="Takami H."/>
            <person name="Nakasone K."/>
            <person name="Takaki Y."/>
            <person name="Maeno G."/>
            <person name="Sasaki R."/>
            <person name="Masui N."/>
            <person name="Fuji F."/>
            <person name="Hirama C."/>
            <person name="Nakamura Y."/>
            <person name="Ogasawara N."/>
            <person name="Kuhara S."/>
            <person name="Horikoshi K."/>
        </authorList>
    </citation>
    <scope>NUCLEOTIDE SEQUENCE [LARGE SCALE GENOMIC DNA]</scope>
    <source>
        <strain>ATCC BAA-125 / DSM 18197 / FERM 7344 / JCM 9153 / C-125</strain>
    </source>
</reference>
<organism>
    <name type="scientific">Halalkalibacterium halodurans (strain ATCC BAA-125 / DSM 18197 / FERM 7344 / JCM 9153 / C-125)</name>
    <name type="common">Bacillus halodurans</name>
    <dbReference type="NCBI Taxonomy" id="272558"/>
    <lineage>
        <taxon>Bacteria</taxon>
        <taxon>Bacillati</taxon>
        <taxon>Bacillota</taxon>
        <taxon>Bacilli</taxon>
        <taxon>Bacillales</taxon>
        <taxon>Bacillaceae</taxon>
        <taxon>Halalkalibacterium (ex Joshi et al. 2022)</taxon>
    </lineage>
</organism>
<sequence>MREQLEALRDDAIKKIEQAQEKKVVQEIRVKYLGKKGPVTEVLRGMGKLSPEERPVIGQLANDVREAIGKAIESKMEALEQAEIHRKLQEETIDVTLPGRPVLKGGAHPLTATITEVEDLFIGLGFSVAEGPQIETDYYNFEALNLPKDHPARDMQDSFYFTDELLLRTQTSPVQARTMEKYKGKGPIKIICPGKVFRRDDDDATHSHQFMQIEGLYVDHGVRMSDLKGVLQAFAKSFFGEERSIRLRPSFFPFTEPSVEVDVSCGICHGDGCRVCKQTGWIEILGAGMVHPRVLEMSGFNPNEYSGFAFGMGVERLSMLKYGIDDIRHFYTNDRRFLAQFKRV</sequence>
<accession>Q9K895</accession>
<proteinExistence type="inferred from homology"/>
<protein>
    <recommendedName>
        <fullName>Phenylalanine--tRNA ligase alpha subunit</fullName>
        <ecNumber>6.1.1.20</ecNumber>
    </recommendedName>
    <alternativeName>
        <fullName>Phenylalanyl-tRNA synthetase alpha subunit</fullName>
        <shortName>PheRS</shortName>
    </alternativeName>
</protein>
<feature type="chain" id="PRO_0000126663" description="Phenylalanine--tRNA ligase alpha subunit">
    <location>
        <begin position="1"/>
        <end position="344"/>
    </location>
</feature>
<feature type="binding site" evidence="1">
    <location>
        <position position="256"/>
    </location>
    <ligand>
        <name>Mg(2+)</name>
        <dbReference type="ChEBI" id="CHEBI:18420"/>
        <note>shared with beta subunit</note>
    </ligand>
</feature>
<comment type="catalytic activity">
    <reaction>
        <text>tRNA(Phe) + L-phenylalanine + ATP = L-phenylalanyl-tRNA(Phe) + AMP + diphosphate + H(+)</text>
        <dbReference type="Rhea" id="RHEA:19413"/>
        <dbReference type="Rhea" id="RHEA-COMP:9668"/>
        <dbReference type="Rhea" id="RHEA-COMP:9699"/>
        <dbReference type="ChEBI" id="CHEBI:15378"/>
        <dbReference type="ChEBI" id="CHEBI:30616"/>
        <dbReference type="ChEBI" id="CHEBI:33019"/>
        <dbReference type="ChEBI" id="CHEBI:58095"/>
        <dbReference type="ChEBI" id="CHEBI:78442"/>
        <dbReference type="ChEBI" id="CHEBI:78531"/>
        <dbReference type="ChEBI" id="CHEBI:456215"/>
        <dbReference type="EC" id="6.1.1.20"/>
    </reaction>
</comment>
<comment type="cofactor">
    <cofactor evidence="1">
        <name>Mg(2+)</name>
        <dbReference type="ChEBI" id="CHEBI:18420"/>
    </cofactor>
    <text evidence="1">Binds 2 magnesium ions per tetramer.</text>
</comment>
<comment type="subunit">
    <text evidence="1">Tetramer of two alpha and two beta subunits.</text>
</comment>
<comment type="subcellular location">
    <subcellularLocation>
        <location evidence="1">Cytoplasm</location>
    </subcellularLocation>
</comment>
<comment type="similarity">
    <text evidence="2">Belongs to the class-II aminoacyl-tRNA synthetase family. Phe-tRNA synthetase alpha subunit type 1 subfamily.</text>
</comment>
<name>SYFA_HALH5</name>